<accession>Q8Y444</accession>
<comment type="function">
    <text evidence="1">This protein binds to the 23S rRNA, and is important in its secondary structure. It is located near the subunit interface in the base of the L7/L12 stalk, and near the tRNA binding site of the peptidyltransferase center.</text>
</comment>
<comment type="subunit">
    <text evidence="1">Part of the 50S ribosomal subunit.</text>
</comment>
<comment type="similarity">
    <text evidence="1">Belongs to the universal ribosomal protein uL6 family.</text>
</comment>
<dbReference type="EMBL" id="AL591983">
    <property type="protein sequence ID" value="CAD00695.1"/>
    <property type="molecule type" value="Genomic_DNA"/>
</dbReference>
<dbReference type="PIR" id="AI1401">
    <property type="entry name" value="AI1401"/>
</dbReference>
<dbReference type="RefSeq" id="NP_466140.1">
    <property type="nucleotide sequence ID" value="NC_003210.1"/>
</dbReference>
<dbReference type="RefSeq" id="WP_003723683.1">
    <property type="nucleotide sequence ID" value="NZ_CP149495.1"/>
</dbReference>
<dbReference type="PDB" id="7NHN">
    <property type="method" value="EM"/>
    <property type="resolution" value="2.90 A"/>
    <property type="chains" value="K=1-178"/>
</dbReference>
<dbReference type="PDB" id="8A57">
    <property type="method" value="EM"/>
    <property type="resolution" value="2.30 A"/>
    <property type="chains" value="K=1-178"/>
</dbReference>
<dbReference type="PDB" id="8A5I">
    <property type="method" value="EM"/>
    <property type="resolution" value="2.30 A"/>
    <property type="chains" value="K=1-178"/>
</dbReference>
<dbReference type="PDB" id="8A63">
    <property type="method" value="EM"/>
    <property type="resolution" value="3.10 A"/>
    <property type="chains" value="K=1-178"/>
</dbReference>
<dbReference type="PDBsum" id="7NHN"/>
<dbReference type="PDBsum" id="8A57"/>
<dbReference type="PDBsum" id="8A5I"/>
<dbReference type="PDBsum" id="8A63"/>
<dbReference type="EMDB" id="EMD-12334"/>
<dbReference type="EMDB" id="EMD-15161"/>
<dbReference type="EMDB" id="EMD-15175"/>
<dbReference type="EMDB" id="EMD-15204"/>
<dbReference type="SMR" id="Q8Y444"/>
<dbReference type="STRING" id="169963.gene:17595335"/>
<dbReference type="PaxDb" id="169963-lmo2617"/>
<dbReference type="EnsemblBacteria" id="CAD00695">
    <property type="protein sequence ID" value="CAD00695"/>
    <property type="gene ID" value="CAD00695"/>
</dbReference>
<dbReference type="GeneID" id="987196"/>
<dbReference type="KEGG" id="lmo:lmo2617"/>
<dbReference type="PATRIC" id="fig|169963.11.peg.2681"/>
<dbReference type="eggNOG" id="COG0097">
    <property type="taxonomic scope" value="Bacteria"/>
</dbReference>
<dbReference type="HOGENOM" id="CLU_065464_1_2_9"/>
<dbReference type="OrthoDB" id="9805007at2"/>
<dbReference type="PhylomeDB" id="Q8Y444"/>
<dbReference type="BioCyc" id="LMON169963:LMO2617-MONOMER"/>
<dbReference type="Proteomes" id="UP000000817">
    <property type="component" value="Chromosome"/>
</dbReference>
<dbReference type="GO" id="GO:0022625">
    <property type="term" value="C:cytosolic large ribosomal subunit"/>
    <property type="evidence" value="ECO:0000318"/>
    <property type="project" value="GO_Central"/>
</dbReference>
<dbReference type="GO" id="GO:0019843">
    <property type="term" value="F:rRNA binding"/>
    <property type="evidence" value="ECO:0007669"/>
    <property type="project" value="UniProtKB-UniRule"/>
</dbReference>
<dbReference type="GO" id="GO:0003735">
    <property type="term" value="F:structural constituent of ribosome"/>
    <property type="evidence" value="ECO:0000318"/>
    <property type="project" value="GO_Central"/>
</dbReference>
<dbReference type="GO" id="GO:0002181">
    <property type="term" value="P:cytoplasmic translation"/>
    <property type="evidence" value="ECO:0000318"/>
    <property type="project" value="GO_Central"/>
</dbReference>
<dbReference type="FunFam" id="3.90.930.12:FF:000001">
    <property type="entry name" value="50S ribosomal protein L6"/>
    <property type="match status" value="1"/>
</dbReference>
<dbReference type="FunFam" id="3.90.930.12:FF:000002">
    <property type="entry name" value="50S ribosomal protein L6"/>
    <property type="match status" value="1"/>
</dbReference>
<dbReference type="Gene3D" id="3.90.930.12">
    <property type="entry name" value="Ribosomal protein L6, alpha-beta domain"/>
    <property type="match status" value="2"/>
</dbReference>
<dbReference type="HAMAP" id="MF_01365_B">
    <property type="entry name" value="Ribosomal_uL6_B"/>
    <property type="match status" value="1"/>
</dbReference>
<dbReference type="InterPro" id="IPR000702">
    <property type="entry name" value="Ribosomal_uL6-like"/>
</dbReference>
<dbReference type="InterPro" id="IPR036789">
    <property type="entry name" value="Ribosomal_uL6-like_a/b-dom_sf"/>
</dbReference>
<dbReference type="InterPro" id="IPR020040">
    <property type="entry name" value="Ribosomal_uL6_a/b-dom"/>
</dbReference>
<dbReference type="InterPro" id="IPR019906">
    <property type="entry name" value="Ribosomal_uL6_bac-type"/>
</dbReference>
<dbReference type="InterPro" id="IPR002358">
    <property type="entry name" value="Ribosomal_uL6_CS"/>
</dbReference>
<dbReference type="NCBIfam" id="TIGR03654">
    <property type="entry name" value="L6_bact"/>
    <property type="match status" value="1"/>
</dbReference>
<dbReference type="PANTHER" id="PTHR11655">
    <property type="entry name" value="60S/50S RIBOSOMAL PROTEIN L6/L9"/>
    <property type="match status" value="1"/>
</dbReference>
<dbReference type="PANTHER" id="PTHR11655:SF14">
    <property type="entry name" value="LARGE RIBOSOMAL SUBUNIT PROTEIN UL6M"/>
    <property type="match status" value="1"/>
</dbReference>
<dbReference type="Pfam" id="PF00347">
    <property type="entry name" value="Ribosomal_L6"/>
    <property type="match status" value="2"/>
</dbReference>
<dbReference type="PIRSF" id="PIRSF002162">
    <property type="entry name" value="Ribosomal_L6"/>
    <property type="match status" value="1"/>
</dbReference>
<dbReference type="PRINTS" id="PR00059">
    <property type="entry name" value="RIBOSOMALL6"/>
</dbReference>
<dbReference type="SUPFAM" id="SSF56053">
    <property type="entry name" value="Ribosomal protein L6"/>
    <property type="match status" value="2"/>
</dbReference>
<dbReference type="PROSITE" id="PS00525">
    <property type="entry name" value="RIBOSOMAL_L6_1"/>
    <property type="match status" value="1"/>
</dbReference>
<proteinExistence type="evidence at protein level"/>
<keyword id="KW-0002">3D-structure</keyword>
<keyword id="KW-1185">Reference proteome</keyword>
<keyword id="KW-0687">Ribonucleoprotein</keyword>
<keyword id="KW-0689">Ribosomal protein</keyword>
<keyword id="KW-0694">RNA-binding</keyword>
<keyword id="KW-0699">rRNA-binding</keyword>
<sequence length="178" mass="19400">MSRIGKKTIVIPAGVTVTLNGSTATVKGPKGELVKEFNPEITIKIEGNEINVSRPTDNKNHRALHGTTRAILNNMVVGVSEGYEKKLELIGVGYRAQKQGDKLVLNVGYSHPVEFVAPKGVDIEVPANTQVIVKGYNKEHVGELAANIRAVRPPEPYKGKGIRYEGEHVRRKEGKTGK</sequence>
<feature type="chain" id="PRO_0000260888" description="Large ribosomal subunit protein uL6">
    <location>
        <begin position="1"/>
        <end position="178"/>
    </location>
</feature>
<feature type="strand" evidence="3">
    <location>
        <begin position="16"/>
        <end position="27"/>
    </location>
</feature>
<feature type="strand" evidence="3">
    <location>
        <begin position="32"/>
        <end position="36"/>
    </location>
</feature>
<feature type="strand" evidence="3">
    <location>
        <begin position="41"/>
        <end position="45"/>
    </location>
</feature>
<feature type="strand" evidence="3">
    <location>
        <begin position="47"/>
        <end position="53"/>
    </location>
</feature>
<feature type="helix" evidence="3">
    <location>
        <begin position="61"/>
        <end position="80"/>
    </location>
</feature>
<feature type="strand" evidence="3">
    <location>
        <begin position="83"/>
        <end position="91"/>
    </location>
</feature>
<feature type="strand" evidence="3">
    <location>
        <begin position="95"/>
        <end position="106"/>
    </location>
</feature>
<feature type="strand" evidence="3">
    <location>
        <begin position="108"/>
        <end position="111"/>
    </location>
</feature>
<feature type="strand" evidence="3">
    <location>
        <begin position="113"/>
        <end position="115"/>
    </location>
</feature>
<feature type="strand" evidence="3">
    <location>
        <begin position="122"/>
        <end position="124"/>
    </location>
</feature>
<feature type="strand" evidence="3">
    <location>
        <begin position="131"/>
        <end position="136"/>
    </location>
</feature>
<feature type="helix" evidence="3">
    <location>
        <begin position="138"/>
        <end position="149"/>
    </location>
</feature>
<feature type="turn" evidence="3">
    <location>
        <begin position="156"/>
        <end position="158"/>
    </location>
</feature>
<feature type="strand" evidence="3">
    <location>
        <begin position="161"/>
        <end position="164"/>
    </location>
</feature>
<gene>
    <name evidence="1" type="primary">rplF</name>
    <name type="ordered locus">lmo2617</name>
</gene>
<protein>
    <recommendedName>
        <fullName evidence="1">Large ribosomal subunit protein uL6</fullName>
    </recommendedName>
    <alternativeName>
        <fullName evidence="2">50S ribosomal protein L6</fullName>
    </alternativeName>
</protein>
<name>RL6_LISMO</name>
<reference key="1">
    <citation type="journal article" date="2001" name="Science">
        <title>Comparative genomics of Listeria species.</title>
        <authorList>
            <person name="Glaser P."/>
            <person name="Frangeul L."/>
            <person name="Buchrieser C."/>
            <person name="Rusniok C."/>
            <person name="Amend A."/>
            <person name="Baquero F."/>
            <person name="Berche P."/>
            <person name="Bloecker H."/>
            <person name="Brandt P."/>
            <person name="Chakraborty T."/>
            <person name="Charbit A."/>
            <person name="Chetouani F."/>
            <person name="Couve E."/>
            <person name="de Daruvar A."/>
            <person name="Dehoux P."/>
            <person name="Domann E."/>
            <person name="Dominguez-Bernal G."/>
            <person name="Duchaud E."/>
            <person name="Durant L."/>
            <person name="Dussurget O."/>
            <person name="Entian K.-D."/>
            <person name="Fsihi H."/>
            <person name="Garcia-del Portillo F."/>
            <person name="Garrido P."/>
            <person name="Gautier L."/>
            <person name="Goebel W."/>
            <person name="Gomez-Lopez N."/>
            <person name="Hain T."/>
            <person name="Hauf J."/>
            <person name="Jackson D."/>
            <person name="Jones L.-M."/>
            <person name="Kaerst U."/>
            <person name="Kreft J."/>
            <person name="Kuhn M."/>
            <person name="Kunst F."/>
            <person name="Kurapkat G."/>
            <person name="Madueno E."/>
            <person name="Maitournam A."/>
            <person name="Mata Vicente J."/>
            <person name="Ng E."/>
            <person name="Nedjari H."/>
            <person name="Nordsiek G."/>
            <person name="Novella S."/>
            <person name="de Pablos B."/>
            <person name="Perez-Diaz J.-C."/>
            <person name="Purcell R."/>
            <person name="Remmel B."/>
            <person name="Rose M."/>
            <person name="Schlueter T."/>
            <person name="Simoes N."/>
            <person name="Tierrez A."/>
            <person name="Vazquez-Boland J.-A."/>
            <person name="Voss H."/>
            <person name="Wehland J."/>
            <person name="Cossart P."/>
        </authorList>
    </citation>
    <scope>NUCLEOTIDE SEQUENCE [LARGE SCALE GENOMIC DNA]</scope>
    <source>
        <strain>ATCC BAA-679 / EGD-e</strain>
    </source>
</reference>
<evidence type="ECO:0000255" key="1">
    <source>
        <dbReference type="HAMAP-Rule" id="MF_01365"/>
    </source>
</evidence>
<evidence type="ECO:0000305" key="2"/>
<evidence type="ECO:0007829" key="3">
    <source>
        <dbReference type="PDB" id="8A57"/>
    </source>
</evidence>
<organism>
    <name type="scientific">Listeria monocytogenes serovar 1/2a (strain ATCC BAA-679 / EGD-e)</name>
    <dbReference type="NCBI Taxonomy" id="169963"/>
    <lineage>
        <taxon>Bacteria</taxon>
        <taxon>Bacillati</taxon>
        <taxon>Bacillota</taxon>
        <taxon>Bacilli</taxon>
        <taxon>Bacillales</taxon>
        <taxon>Listeriaceae</taxon>
        <taxon>Listeria</taxon>
    </lineage>
</organism>